<accession>P0DOV5</accession>
<dbReference type="EC" id="1.1.1.390" evidence="2"/>
<dbReference type="EMBL" id="JTCJ01000004">
    <property type="protein sequence ID" value="KHL76346.1"/>
    <property type="molecule type" value="Genomic_DNA"/>
</dbReference>
<dbReference type="PDB" id="9GWU">
    <property type="method" value="X-ray"/>
    <property type="resolution" value="1.70 A"/>
    <property type="chains" value="A/B=1-260"/>
</dbReference>
<dbReference type="PDB" id="9GWV">
    <property type="method" value="X-ray"/>
    <property type="resolution" value="1.90 A"/>
    <property type="chains" value="A/B=1-260"/>
</dbReference>
<dbReference type="PDB" id="9GWW">
    <property type="method" value="X-ray"/>
    <property type="resolution" value="1.90 A"/>
    <property type="chains" value="A/B=1-260"/>
</dbReference>
<dbReference type="PDBsum" id="9GWU"/>
<dbReference type="PDBsum" id="9GWV"/>
<dbReference type="PDBsum" id="9GWW"/>
<dbReference type="SMR" id="P0DOV5"/>
<dbReference type="KEGG" id="ag:KHL76346"/>
<dbReference type="BRENDA" id="1.1.1.390">
    <property type="organism ID" value="5092"/>
</dbReference>
<dbReference type="GO" id="GO:0016491">
    <property type="term" value="F:oxidoreductase activity"/>
    <property type="evidence" value="ECO:0007669"/>
    <property type="project" value="UniProtKB-KW"/>
</dbReference>
<dbReference type="CDD" id="cd05233">
    <property type="entry name" value="SDR_c"/>
    <property type="match status" value="1"/>
</dbReference>
<dbReference type="FunFam" id="3.40.50.720:FF:000084">
    <property type="entry name" value="Short-chain dehydrogenase reductase"/>
    <property type="match status" value="1"/>
</dbReference>
<dbReference type="Gene3D" id="3.40.50.720">
    <property type="entry name" value="NAD(P)-binding Rossmann-like Domain"/>
    <property type="match status" value="1"/>
</dbReference>
<dbReference type="InterPro" id="IPR036291">
    <property type="entry name" value="NAD(P)-bd_dom_sf"/>
</dbReference>
<dbReference type="InterPro" id="IPR020904">
    <property type="entry name" value="Sc_DH/Rdtase_CS"/>
</dbReference>
<dbReference type="InterPro" id="IPR002347">
    <property type="entry name" value="SDR_fam"/>
</dbReference>
<dbReference type="PANTHER" id="PTHR43639">
    <property type="entry name" value="OXIDOREDUCTASE, SHORT-CHAIN DEHYDROGENASE/REDUCTASE FAMILY (AFU_ORTHOLOGUE AFUA_5G02870)"/>
    <property type="match status" value="1"/>
</dbReference>
<dbReference type="PANTHER" id="PTHR43639:SF1">
    <property type="entry name" value="SHORT-CHAIN DEHYDROGENASE_REDUCTASE FAMILY PROTEIN"/>
    <property type="match status" value="1"/>
</dbReference>
<dbReference type="Pfam" id="PF13561">
    <property type="entry name" value="adh_short_C2"/>
    <property type="match status" value="1"/>
</dbReference>
<dbReference type="PRINTS" id="PR00081">
    <property type="entry name" value="GDHRDH"/>
</dbReference>
<dbReference type="PRINTS" id="PR00080">
    <property type="entry name" value="SDRFAMILY"/>
</dbReference>
<dbReference type="SMART" id="SM00822">
    <property type="entry name" value="PKS_KR"/>
    <property type="match status" value="1"/>
</dbReference>
<dbReference type="SUPFAM" id="SSF51735">
    <property type="entry name" value="NAD(P)-binding Rossmann-fold domains"/>
    <property type="match status" value="1"/>
</dbReference>
<dbReference type="PROSITE" id="PS00061">
    <property type="entry name" value="ADH_SHORT"/>
    <property type="match status" value="1"/>
</dbReference>
<sequence length="260" mass="27870">MNRHTDTHYPSLADKVVLISGGASGIGRAFVEAFVAQGSRVAFLDLDAEAGQGLAHALGANSLFLPCDVRDIERLKACVAEVERTWGAVDVLINNAARDDRHALADVSVEYWDERMQTNLRHAFFAAQAVAPGMARRGSGAIINMGSISWMRGRPGMVCYTTAKAALNGMTRTLARELGGQGIRINSLVPGAIRTERQDAMWAADPAGLEAASQAFIDQQMLKFRLDASDCARLALFLASDDSRGCTGQNFVVDAGLSIQ</sequence>
<proteinExistence type="evidence at protein level"/>
<evidence type="ECO:0000255" key="1">
    <source>
        <dbReference type="PROSITE-ProRule" id="PRU10001"/>
    </source>
</evidence>
<evidence type="ECO:0000269" key="2">
    <source>
    </source>
</evidence>
<evidence type="ECO:0000303" key="3">
    <source>
    </source>
</evidence>
<evidence type="ECO:0000305" key="4"/>
<evidence type="ECO:0000312" key="5">
    <source>
        <dbReference type="EMBL" id="KHL76346.1"/>
    </source>
</evidence>
<gene>
    <name evidence="5" type="ORF">PpSQ1_00405</name>
</gene>
<organism>
    <name type="scientific">Pseudomonas putida</name>
    <name type="common">Arthrobacter siderocapsulatus</name>
    <dbReference type="NCBI Taxonomy" id="303"/>
    <lineage>
        <taxon>Bacteria</taxon>
        <taxon>Pseudomonadati</taxon>
        <taxon>Pseudomonadota</taxon>
        <taxon>Gammaproteobacteria</taxon>
        <taxon>Pseudomonadales</taxon>
        <taxon>Pseudomonadaceae</taxon>
        <taxon>Pseudomonas</taxon>
    </lineage>
</organism>
<feature type="chain" id="PRO_0000438490" description="Sulfoquinovose 1-dehydrogenase">
    <location>
        <begin position="1"/>
        <end position="260"/>
    </location>
</feature>
<feature type="active site" description="Proton acceptor" evidence="1">
    <location>
        <position position="160"/>
    </location>
</feature>
<comment type="function">
    <text evidence="2">Catalyzes the oxidation of sulfoquinovose to 6-deoxy-6-sulfo-D-glucono-1,5-lactone, with a strong preference for NAD(+) as the electron acceptor. Is involved in a degradation pathway of sulfoquinovose (SQ) that allows P.putida SQ1 to use SQ as the sole carbon and energy source for growth.</text>
</comment>
<comment type="catalytic activity">
    <reaction evidence="2">
        <text>6-sulfo-D-quinovose + NAD(+) = 6-deoxy-6-sulfo-D-glucono-1,5-lactone + NADH + H(+)</text>
        <dbReference type="Rhea" id="RHEA:47896"/>
        <dbReference type="ChEBI" id="CHEBI:15378"/>
        <dbReference type="ChEBI" id="CHEBI:57540"/>
        <dbReference type="ChEBI" id="CHEBI:57945"/>
        <dbReference type="ChEBI" id="CHEBI:77132"/>
        <dbReference type="ChEBI" id="CHEBI:88091"/>
        <dbReference type="EC" id="1.1.1.390"/>
    </reaction>
</comment>
<comment type="biophysicochemical properties">
    <kinetics>
        <KM evidence="2">0.5 mM for sulfoquinovose with NAD(+) as cosubstrate</KM>
        <KM evidence="2">2.4 mM for sulfoquinovose with NADP(+) as cosubstrate</KM>
        <Vmax evidence="2">62.8 umol/min/mg enzyme for sulfoquinovose oxidation with NAD(+)</Vmax>
        <Vmax evidence="2">2.7 umol/min/mg enzyme for sulfoquinovose oxidation with NADP(+)</Vmax>
        <text evidence="2">kcat is 33.8 sec(-1) for sulfoquinovose oxidation with NAD(+). kcat is 1.4 sec(-1) for sulfoquinovose oxidation with NADP(+).</text>
    </kinetics>
    <phDependence>
        <text evidence="2">Optimum pH is 8-9.</text>
    </phDependence>
</comment>
<comment type="induction">
    <text evidence="2">Is highly up-regulated during growth on sulfoquinovose, compared to growth on glucose or succinate (at protein level).</text>
</comment>
<comment type="similarity">
    <text evidence="4">Belongs to the short-chain dehydrogenases/reductases (SDR) family.</text>
</comment>
<name>SQD_PSEPU</name>
<reference key="1">
    <citation type="journal article" date="2015" name="Stand. Genomic Sci.">
        <title>Permanent draft genome sequence of sulfoquinovose-degrading Pseudomonas putida strain SQ1.</title>
        <authorList>
            <person name="Felux A.K."/>
            <person name="Franchini P."/>
            <person name="Schleheck D."/>
        </authorList>
    </citation>
    <scope>NUCLEOTIDE SEQUENCE [LARGE SCALE GENOMIC DNA]</scope>
    <source>
        <strain>SQ1</strain>
    </source>
</reference>
<reference key="2">
    <citation type="journal article" date="2015" name="Proc. Natl. Acad. Sci. U.S.A.">
        <title>Entner-Doudoroff pathway for sulfoquinovose degradation in Pseudomonas putida SQ1.</title>
        <authorList>
            <person name="Felux A.K."/>
            <person name="Spiteller D."/>
            <person name="Klebensberger J."/>
            <person name="Schleheck D."/>
        </authorList>
    </citation>
    <scope>FUNCTION</scope>
    <scope>CATALYTIC ACTIVITY</scope>
    <scope>BIOPHYSICOCHEMICAL PROPERTIES</scope>
    <scope>INDUCTION</scope>
    <source>
        <strain>SQ1</strain>
    </source>
</reference>
<keyword id="KW-0002">3D-structure</keyword>
<keyword id="KW-0520">NAD</keyword>
<keyword id="KW-0560">Oxidoreductase</keyword>
<protein>
    <recommendedName>
        <fullName evidence="4">Sulfoquinovose 1-dehydrogenase</fullName>
        <shortName evidence="3">SQ dehydrogenase</shortName>
        <ecNumber evidence="2">1.1.1.390</ecNumber>
    </recommendedName>
</protein>